<proteinExistence type="inferred from homology"/>
<comment type="function">
    <text evidence="1">Catalyzes the ATP-dependent amination of UTP to CTP with either L-glutamine or ammonia as the source of nitrogen. Regulates intracellular CTP levels through interactions with the four ribonucleotide triphosphates.</text>
</comment>
<comment type="catalytic activity">
    <reaction evidence="1">
        <text>UTP + L-glutamine + ATP + H2O = CTP + L-glutamate + ADP + phosphate + 2 H(+)</text>
        <dbReference type="Rhea" id="RHEA:26426"/>
        <dbReference type="ChEBI" id="CHEBI:15377"/>
        <dbReference type="ChEBI" id="CHEBI:15378"/>
        <dbReference type="ChEBI" id="CHEBI:29985"/>
        <dbReference type="ChEBI" id="CHEBI:30616"/>
        <dbReference type="ChEBI" id="CHEBI:37563"/>
        <dbReference type="ChEBI" id="CHEBI:43474"/>
        <dbReference type="ChEBI" id="CHEBI:46398"/>
        <dbReference type="ChEBI" id="CHEBI:58359"/>
        <dbReference type="ChEBI" id="CHEBI:456216"/>
        <dbReference type="EC" id="6.3.4.2"/>
    </reaction>
</comment>
<comment type="catalytic activity">
    <reaction evidence="1">
        <text>L-glutamine + H2O = L-glutamate + NH4(+)</text>
        <dbReference type="Rhea" id="RHEA:15889"/>
        <dbReference type="ChEBI" id="CHEBI:15377"/>
        <dbReference type="ChEBI" id="CHEBI:28938"/>
        <dbReference type="ChEBI" id="CHEBI:29985"/>
        <dbReference type="ChEBI" id="CHEBI:58359"/>
    </reaction>
</comment>
<comment type="catalytic activity">
    <reaction evidence="1">
        <text>UTP + NH4(+) + ATP = CTP + ADP + phosphate + 2 H(+)</text>
        <dbReference type="Rhea" id="RHEA:16597"/>
        <dbReference type="ChEBI" id="CHEBI:15378"/>
        <dbReference type="ChEBI" id="CHEBI:28938"/>
        <dbReference type="ChEBI" id="CHEBI:30616"/>
        <dbReference type="ChEBI" id="CHEBI:37563"/>
        <dbReference type="ChEBI" id="CHEBI:43474"/>
        <dbReference type="ChEBI" id="CHEBI:46398"/>
        <dbReference type="ChEBI" id="CHEBI:456216"/>
    </reaction>
</comment>
<comment type="activity regulation">
    <text evidence="1">Allosterically activated by GTP, when glutamine is the substrate; GTP has no effect on the reaction when ammonia is the substrate. The allosteric effector GTP functions by stabilizing the protein conformation that binds the tetrahedral intermediate(s) formed during glutamine hydrolysis. Inhibited by the product CTP, via allosteric rather than competitive inhibition.</text>
</comment>
<comment type="pathway">
    <text evidence="1">Pyrimidine metabolism; CTP biosynthesis via de novo pathway; CTP from UDP: step 2/2.</text>
</comment>
<comment type="subunit">
    <text evidence="1">Homotetramer.</text>
</comment>
<comment type="miscellaneous">
    <text evidence="1">CTPSs have evolved a hybrid strategy for distinguishing between UTP and CTP. The overlapping regions of the product feedback inhibitory and substrate sites recognize a common feature in both compounds, the triphosphate moiety. To differentiate isosteric substrate and product pyrimidine rings, an additional pocket far from the expected kinase/ligase catalytic site, specifically recognizes the cytosine and ribose portions of the product inhibitor.</text>
</comment>
<comment type="similarity">
    <text evidence="1">Belongs to the CTP synthase family.</text>
</comment>
<gene>
    <name evidence="1" type="primary">pyrG</name>
    <name type="ordered locus">CPR_2182</name>
</gene>
<name>PYRG_CLOPS</name>
<sequence length="535" mass="59656">MSKNTKYVFVTGGVVSSLGKGITAASLGRLLKNRGLSVSIQKFDPYLNIDPGTMSPYQHGEVFVTDDGAETDLDLGHYERFIDENLTQNSNVTSGRVYWSVISKERKGEYLGGTVQVIPHITNAIKDRVHRVGKERDVDVVITEIGGTIGDIESLPFLEAIRQIKYDVGKENVCFIHVTLVPYLGKAGELKTKPTQHSVKELRSIGIQPDIIVCRSEKELSEDIKKKIGLFCNIDASEVIQNLDAEHLYAVPLMLHKEGLDRLVCEKLGLGCRDIDNAEWIDMVHRITHLTHTTKIALVGKYVELHDAYISVVEALNHGGLSNDTNVEIEWINAEDVTKENVDELLSGVDGVLVPGGFGDRGVEGKIEAIRWARENKKPFLGICLGMQCAVIEYARNVLGLEGAHSSELNPETPFPVIDLMPEQKDVEDLGGTMRLGLYPCKLEDNTFCKDVYASDLIYERHRHRYEFNNEYRTQLIESGLTIAGTSPDGRLVECVEVKDHPWFVAVQYHPELKSRPNRPHPLFVGFVGAALNNK</sequence>
<keyword id="KW-0067">ATP-binding</keyword>
<keyword id="KW-0315">Glutamine amidotransferase</keyword>
<keyword id="KW-0436">Ligase</keyword>
<keyword id="KW-0460">Magnesium</keyword>
<keyword id="KW-0479">Metal-binding</keyword>
<keyword id="KW-0547">Nucleotide-binding</keyword>
<keyword id="KW-0665">Pyrimidine biosynthesis</keyword>
<accession>Q0SQX5</accession>
<organism>
    <name type="scientific">Clostridium perfringens (strain SM101 / Type A)</name>
    <dbReference type="NCBI Taxonomy" id="289380"/>
    <lineage>
        <taxon>Bacteria</taxon>
        <taxon>Bacillati</taxon>
        <taxon>Bacillota</taxon>
        <taxon>Clostridia</taxon>
        <taxon>Eubacteriales</taxon>
        <taxon>Clostridiaceae</taxon>
        <taxon>Clostridium</taxon>
    </lineage>
</organism>
<evidence type="ECO:0000255" key="1">
    <source>
        <dbReference type="HAMAP-Rule" id="MF_01227"/>
    </source>
</evidence>
<protein>
    <recommendedName>
        <fullName evidence="1">CTP synthase</fullName>
        <ecNumber evidence="1">6.3.4.2</ecNumber>
    </recommendedName>
    <alternativeName>
        <fullName evidence="1">Cytidine 5'-triphosphate synthase</fullName>
    </alternativeName>
    <alternativeName>
        <fullName evidence="1">Cytidine triphosphate synthetase</fullName>
        <shortName evidence="1">CTP synthetase</shortName>
        <shortName evidence="1">CTPS</shortName>
    </alternativeName>
    <alternativeName>
        <fullName evidence="1">UTP--ammonia ligase</fullName>
    </alternativeName>
</protein>
<dbReference type="EC" id="6.3.4.2" evidence="1"/>
<dbReference type="EMBL" id="CP000312">
    <property type="protein sequence ID" value="ABG85740.1"/>
    <property type="molecule type" value="Genomic_DNA"/>
</dbReference>
<dbReference type="RefSeq" id="WP_003452392.1">
    <property type="nucleotide sequence ID" value="NZ_CAXVKH010000010.1"/>
</dbReference>
<dbReference type="SMR" id="Q0SQX5"/>
<dbReference type="KEGG" id="cpr:CPR_2182"/>
<dbReference type="UniPathway" id="UPA00159">
    <property type="reaction ID" value="UER00277"/>
</dbReference>
<dbReference type="Proteomes" id="UP000001824">
    <property type="component" value="Chromosome"/>
</dbReference>
<dbReference type="GO" id="GO:0005829">
    <property type="term" value="C:cytosol"/>
    <property type="evidence" value="ECO:0007669"/>
    <property type="project" value="TreeGrafter"/>
</dbReference>
<dbReference type="GO" id="GO:0005524">
    <property type="term" value="F:ATP binding"/>
    <property type="evidence" value="ECO:0007669"/>
    <property type="project" value="UniProtKB-KW"/>
</dbReference>
<dbReference type="GO" id="GO:0003883">
    <property type="term" value="F:CTP synthase activity"/>
    <property type="evidence" value="ECO:0007669"/>
    <property type="project" value="UniProtKB-UniRule"/>
</dbReference>
<dbReference type="GO" id="GO:0004359">
    <property type="term" value="F:glutaminase activity"/>
    <property type="evidence" value="ECO:0007669"/>
    <property type="project" value="RHEA"/>
</dbReference>
<dbReference type="GO" id="GO:0042802">
    <property type="term" value="F:identical protein binding"/>
    <property type="evidence" value="ECO:0007669"/>
    <property type="project" value="TreeGrafter"/>
</dbReference>
<dbReference type="GO" id="GO:0046872">
    <property type="term" value="F:metal ion binding"/>
    <property type="evidence" value="ECO:0007669"/>
    <property type="project" value="UniProtKB-KW"/>
</dbReference>
<dbReference type="GO" id="GO:0044210">
    <property type="term" value="P:'de novo' CTP biosynthetic process"/>
    <property type="evidence" value="ECO:0007669"/>
    <property type="project" value="UniProtKB-UniRule"/>
</dbReference>
<dbReference type="GO" id="GO:0019856">
    <property type="term" value="P:pyrimidine nucleobase biosynthetic process"/>
    <property type="evidence" value="ECO:0007669"/>
    <property type="project" value="TreeGrafter"/>
</dbReference>
<dbReference type="CDD" id="cd03113">
    <property type="entry name" value="CTPS_N"/>
    <property type="match status" value="1"/>
</dbReference>
<dbReference type="CDD" id="cd01746">
    <property type="entry name" value="GATase1_CTP_Synthase"/>
    <property type="match status" value="1"/>
</dbReference>
<dbReference type="FunFam" id="3.40.50.300:FF:000009">
    <property type="entry name" value="CTP synthase"/>
    <property type="match status" value="1"/>
</dbReference>
<dbReference type="FunFam" id="3.40.50.880:FF:000002">
    <property type="entry name" value="CTP synthase"/>
    <property type="match status" value="1"/>
</dbReference>
<dbReference type="Gene3D" id="3.40.50.880">
    <property type="match status" value="1"/>
</dbReference>
<dbReference type="Gene3D" id="3.40.50.300">
    <property type="entry name" value="P-loop containing nucleotide triphosphate hydrolases"/>
    <property type="match status" value="1"/>
</dbReference>
<dbReference type="HAMAP" id="MF_01227">
    <property type="entry name" value="PyrG"/>
    <property type="match status" value="1"/>
</dbReference>
<dbReference type="InterPro" id="IPR029062">
    <property type="entry name" value="Class_I_gatase-like"/>
</dbReference>
<dbReference type="InterPro" id="IPR004468">
    <property type="entry name" value="CTP_synthase"/>
</dbReference>
<dbReference type="InterPro" id="IPR017456">
    <property type="entry name" value="CTP_synthase_N"/>
</dbReference>
<dbReference type="InterPro" id="IPR017926">
    <property type="entry name" value="GATASE"/>
</dbReference>
<dbReference type="InterPro" id="IPR033828">
    <property type="entry name" value="GATase1_CTP_Synthase"/>
</dbReference>
<dbReference type="InterPro" id="IPR027417">
    <property type="entry name" value="P-loop_NTPase"/>
</dbReference>
<dbReference type="NCBIfam" id="NF003792">
    <property type="entry name" value="PRK05380.1"/>
    <property type="match status" value="1"/>
</dbReference>
<dbReference type="NCBIfam" id="TIGR00337">
    <property type="entry name" value="PyrG"/>
    <property type="match status" value="1"/>
</dbReference>
<dbReference type="PANTHER" id="PTHR11550">
    <property type="entry name" value="CTP SYNTHASE"/>
    <property type="match status" value="1"/>
</dbReference>
<dbReference type="PANTHER" id="PTHR11550:SF0">
    <property type="entry name" value="CTP SYNTHASE-RELATED"/>
    <property type="match status" value="1"/>
</dbReference>
<dbReference type="Pfam" id="PF06418">
    <property type="entry name" value="CTP_synth_N"/>
    <property type="match status" value="1"/>
</dbReference>
<dbReference type="Pfam" id="PF00117">
    <property type="entry name" value="GATase"/>
    <property type="match status" value="1"/>
</dbReference>
<dbReference type="SUPFAM" id="SSF52317">
    <property type="entry name" value="Class I glutamine amidotransferase-like"/>
    <property type="match status" value="1"/>
</dbReference>
<dbReference type="SUPFAM" id="SSF52540">
    <property type="entry name" value="P-loop containing nucleoside triphosphate hydrolases"/>
    <property type="match status" value="1"/>
</dbReference>
<dbReference type="PROSITE" id="PS51273">
    <property type="entry name" value="GATASE_TYPE_1"/>
    <property type="match status" value="1"/>
</dbReference>
<feature type="chain" id="PRO_0000266097" description="CTP synthase">
    <location>
        <begin position="1"/>
        <end position="535"/>
    </location>
</feature>
<feature type="domain" description="Glutamine amidotransferase type-1" evidence="1">
    <location>
        <begin position="295"/>
        <end position="535"/>
    </location>
</feature>
<feature type="region of interest" description="Amidoligase domain" evidence="1">
    <location>
        <begin position="1"/>
        <end position="270"/>
    </location>
</feature>
<feature type="active site" description="Nucleophile; for glutamine hydrolysis" evidence="1">
    <location>
        <position position="384"/>
    </location>
</feature>
<feature type="active site" evidence="1">
    <location>
        <position position="510"/>
    </location>
</feature>
<feature type="active site" evidence="1">
    <location>
        <position position="512"/>
    </location>
</feature>
<feature type="binding site" evidence="1">
    <location>
        <position position="16"/>
    </location>
    <ligand>
        <name>CTP</name>
        <dbReference type="ChEBI" id="CHEBI:37563"/>
        <note>allosteric inhibitor</note>
    </ligand>
</feature>
<feature type="binding site" evidence="1">
    <location>
        <position position="16"/>
    </location>
    <ligand>
        <name>UTP</name>
        <dbReference type="ChEBI" id="CHEBI:46398"/>
    </ligand>
</feature>
<feature type="binding site" evidence="1">
    <location>
        <begin position="17"/>
        <end position="22"/>
    </location>
    <ligand>
        <name>ATP</name>
        <dbReference type="ChEBI" id="CHEBI:30616"/>
    </ligand>
</feature>
<feature type="binding site" evidence="1">
    <location>
        <position position="57"/>
    </location>
    <ligand>
        <name>L-glutamine</name>
        <dbReference type="ChEBI" id="CHEBI:58359"/>
    </ligand>
</feature>
<feature type="binding site" evidence="1">
    <location>
        <position position="74"/>
    </location>
    <ligand>
        <name>ATP</name>
        <dbReference type="ChEBI" id="CHEBI:30616"/>
    </ligand>
</feature>
<feature type="binding site" evidence="1">
    <location>
        <position position="74"/>
    </location>
    <ligand>
        <name>Mg(2+)</name>
        <dbReference type="ChEBI" id="CHEBI:18420"/>
    </ligand>
</feature>
<feature type="binding site" evidence="1">
    <location>
        <position position="144"/>
    </location>
    <ligand>
        <name>Mg(2+)</name>
        <dbReference type="ChEBI" id="CHEBI:18420"/>
    </ligand>
</feature>
<feature type="binding site" evidence="1">
    <location>
        <begin position="151"/>
        <end position="153"/>
    </location>
    <ligand>
        <name>CTP</name>
        <dbReference type="ChEBI" id="CHEBI:37563"/>
        <note>allosteric inhibitor</note>
    </ligand>
</feature>
<feature type="binding site" evidence="1">
    <location>
        <begin position="191"/>
        <end position="196"/>
    </location>
    <ligand>
        <name>CTP</name>
        <dbReference type="ChEBI" id="CHEBI:37563"/>
        <note>allosteric inhibitor</note>
    </ligand>
</feature>
<feature type="binding site" evidence="1">
    <location>
        <begin position="191"/>
        <end position="196"/>
    </location>
    <ligand>
        <name>UTP</name>
        <dbReference type="ChEBI" id="CHEBI:46398"/>
    </ligand>
</feature>
<feature type="binding site" evidence="1">
    <location>
        <position position="227"/>
    </location>
    <ligand>
        <name>CTP</name>
        <dbReference type="ChEBI" id="CHEBI:37563"/>
        <note>allosteric inhibitor</note>
    </ligand>
</feature>
<feature type="binding site" evidence="1">
    <location>
        <position position="227"/>
    </location>
    <ligand>
        <name>UTP</name>
        <dbReference type="ChEBI" id="CHEBI:46398"/>
    </ligand>
</feature>
<feature type="binding site" evidence="1">
    <location>
        <position position="357"/>
    </location>
    <ligand>
        <name>L-glutamine</name>
        <dbReference type="ChEBI" id="CHEBI:58359"/>
    </ligand>
</feature>
<feature type="binding site" evidence="1">
    <location>
        <begin position="385"/>
        <end position="388"/>
    </location>
    <ligand>
        <name>L-glutamine</name>
        <dbReference type="ChEBI" id="CHEBI:58359"/>
    </ligand>
</feature>
<feature type="binding site" evidence="1">
    <location>
        <position position="408"/>
    </location>
    <ligand>
        <name>L-glutamine</name>
        <dbReference type="ChEBI" id="CHEBI:58359"/>
    </ligand>
</feature>
<feature type="binding site" evidence="1">
    <location>
        <position position="465"/>
    </location>
    <ligand>
        <name>L-glutamine</name>
        <dbReference type="ChEBI" id="CHEBI:58359"/>
    </ligand>
</feature>
<reference key="1">
    <citation type="journal article" date="2006" name="Genome Res.">
        <title>Skewed genomic variability in strains of the toxigenic bacterial pathogen, Clostridium perfringens.</title>
        <authorList>
            <person name="Myers G.S.A."/>
            <person name="Rasko D.A."/>
            <person name="Cheung J.K."/>
            <person name="Ravel J."/>
            <person name="Seshadri R."/>
            <person name="DeBoy R.T."/>
            <person name="Ren Q."/>
            <person name="Varga J."/>
            <person name="Awad M.M."/>
            <person name="Brinkac L.M."/>
            <person name="Daugherty S.C."/>
            <person name="Haft D.H."/>
            <person name="Dodson R.J."/>
            <person name="Madupu R."/>
            <person name="Nelson W.C."/>
            <person name="Rosovitz M.J."/>
            <person name="Sullivan S.A."/>
            <person name="Khouri H."/>
            <person name="Dimitrov G.I."/>
            <person name="Watkins K.L."/>
            <person name="Mulligan S."/>
            <person name="Benton J."/>
            <person name="Radune D."/>
            <person name="Fisher D.J."/>
            <person name="Atkins H.S."/>
            <person name="Hiscox T."/>
            <person name="Jost B.H."/>
            <person name="Billington S.J."/>
            <person name="Songer J.G."/>
            <person name="McClane B.A."/>
            <person name="Titball R.W."/>
            <person name="Rood J.I."/>
            <person name="Melville S.B."/>
            <person name="Paulsen I.T."/>
        </authorList>
    </citation>
    <scope>NUCLEOTIDE SEQUENCE [LARGE SCALE GENOMIC DNA]</scope>
    <source>
        <strain>SM101 / Type A</strain>
    </source>
</reference>